<geneLocation type="chloroplast"/>
<feature type="chain" id="PRO_0000128595" description="Large ribosomal subunit protein uL14c">
    <location>
        <begin position="1"/>
        <end position="74"/>
    </location>
</feature>
<feature type="non-consecutive residues" evidence="2">
    <location>
        <begin position="33"/>
        <end position="34"/>
    </location>
</feature>
<proteinExistence type="inferred from homology"/>
<dbReference type="EMBL" id="M60179">
    <property type="status" value="NOT_ANNOTATED_CDS"/>
    <property type="molecule type" value="Genomic_DNA"/>
</dbReference>
<dbReference type="EMBL" id="M60180">
    <property type="status" value="NOT_ANNOTATED_CDS"/>
    <property type="molecule type" value="Genomic_DNA"/>
</dbReference>
<dbReference type="SMR" id="P42340"/>
<dbReference type="GO" id="GO:0009507">
    <property type="term" value="C:chloroplast"/>
    <property type="evidence" value="ECO:0007669"/>
    <property type="project" value="UniProtKB-SubCell"/>
</dbReference>
<dbReference type="GO" id="GO:0022625">
    <property type="term" value="C:cytosolic large ribosomal subunit"/>
    <property type="evidence" value="ECO:0007669"/>
    <property type="project" value="TreeGrafter"/>
</dbReference>
<dbReference type="GO" id="GO:0070180">
    <property type="term" value="F:large ribosomal subunit rRNA binding"/>
    <property type="evidence" value="ECO:0007669"/>
    <property type="project" value="TreeGrafter"/>
</dbReference>
<dbReference type="GO" id="GO:0003735">
    <property type="term" value="F:structural constituent of ribosome"/>
    <property type="evidence" value="ECO:0007669"/>
    <property type="project" value="InterPro"/>
</dbReference>
<dbReference type="GO" id="GO:0006412">
    <property type="term" value="P:translation"/>
    <property type="evidence" value="ECO:0007669"/>
    <property type="project" value="InterPro"/>
</dbReference>
<dbReference type="CDD" id="cd00337">
    <property type="entry name" value="Ribosomal_uL14"/>
    <property type="match status" value="1"/>
</dbReference>
<dbReference type="Gene3D" id="2.40.150.20">
    <property type="entry name" value="Ribosomal protein L14"/>
    <property type="match status" value="2"/>
</dbReference>
<dbReference type="InterPro" id="IPR000218">
    <property type="entry name" value="Ribosomal_uL14"/>
</dbReference>
<dbReference type="InterPro" id="IPR036853">
    <property type="entry name" value="Ribosomal_uL14_sf"/>
</dbReference>
<dbReference type="PANTHER" id="PTHR11761">
    <property type="entry name" value="50S/60S RIBOSOMAL PROTEIN L14/L23"/>
    <property type="match status" value="1"/>
</dbReference>
<dbReference type="PANTHER" id="PTHR11761:SF3">
    <property type="entry name" value="LARGE RIBOSOMAL SUBUNIT PROTEIN UL14M"/>
    <property type="match status" value="1"/>
</dbReference>
<dbReference type="Pfam" id="PF00238">
    <property type="entry name" value="Ribosomal_L14"/>
    <property type="match status" value="2"/>
</dbReference>
<dbReference type="SMART" id="SM01374">
    <property type="entry name" value="Ribosomal_L14"/>
    <property type="match status" value="1"/>
</dbReference>
<dbReference type="SUPFAM" id="SSF50193">
    <property type="entry name" value="Ribosomal protein L14"/>
    <property type="match status" value="1"/>
</dbReference>
<evidence type="ECO:0000250" key="1"/>
<evidence type="ECO:0000305" key="2"/>
<gene>
    <name type="primary">rpl14</name>
</gene>
<organism>
    <name type="scientific">Oenothera ammophila</name>
    <name type="common">Evening primerose</name>
    <dbReference type="NCBI Taxonomy" id="3949"/>
    <lineage>
        <taxon>Eukaryota</taxon>
        <taxon>Viridiplantae</taxon>
        <taxon>Streptophyta</taxon>
        <taxon>Embryophyta</taxon>
        <taxon>Tracheophyta</taxon>
        <taxon>Spermatophyta</taxon>
        <taxon>Magnoliopsida</taxon>
        <taxon>eudicotyledons</taxon>
        <taxon>Gunneridae</taxon>
        <taxon>Pentapetalae</taxon>
        <taxon>rosids</taxon>
        <taxon>malvids</taxon>
        <taxon>Myrtales</taxon>
        <taxon>Onagraceae</taxon>
        <taxon>Onagroideae</taxon>
        <taxon>Onagreae</taxon>
        <taxon>Oenothera</taxon>
    </lineage>
</organism>
<comment type="function">
    <text evidence="1">Binds to 23S rRNA.</text>
</comment>
<comment type="subunit">
    <text evidence="1">Part of the 50S ribosomal subunit.</text>
</comment>
<comment type="subcellular location">
    <subcellularLocation>
        <location>Plastid</location>
        <location>Chloroplast</location>
    </subcellularLocation>
</comment>
<comment type="similarity">
    <text evidence="2">Belongs to the universal ribosomal protein uL14 family.</text>
</comment>
<reference key="1">
    <citation type="journal article" date="1991" name="Mol. Biol. Evol.">
        <title>Evidence for replication slippage in the evolution of Oenothera chloroplast DNA.</title>
        <authorList>
            <person name="Wolfson R."/>
            <person name="Higgins K.G."/>
            <person name="Sears B.B."/>
        </authorList>
    </citation>
    <scope>NUCLEOTIDE SEQUENCE [GENOMIC DNA]</scope>
</reference>
<accession>P42340</accession>
<keyword id="KW-0150">Chloroplast</keyword>
<keyword id="KW-0934">Plastid</keyword>
<keyword id="KW-0687">Ribonucleoprotein</keyword>
<keyword id="KW-0689">Ribosomal protein</keyword>
<keyword id="KW-0694">RNA-binding</keyword>
<keyword id="KW-0699">rRNA-binding</keyword>
<name>RK14_OENAM</name>
<protein>
    <recommendedName>
        <fullName evidence="2">Large ribosomal subunit protein uL14c</fullName>
    </recommendedName>
    <alternativeName>
        <fullName>50S ribosomal protein L14, chloroplastic</fullName>
    </alternativeName>
</protein>
<sequence length="74" mass="8227">MIQPQTRLNVADNSGARELMCIRIIGASNRRYAHIGDIIVARRNPKGTRVFGAIAHELRELSFTKIVSLAPEVL</sequence>